<protein>
    <recommendedName>
        <fullName evidence="1">tRNA pseudouridine synthase B</fullName>
        <ecNumber evidence="1">5.4.99.25</ecNumber>
    </recommendedName>
    <alternativeName>
        <fullName evidence="1">tRNA pseudouridine(55) synthase</fullName>
        <shortName evidence="1">Psi55 synthase</shortName>
    </alternativeName>
    <alternativeName>
        <fullName evidence="1">tRNA pseudouridylate synthase</fullName>
    </alternativeName>
    <alternativeName>
        <fullName evidence="1">tRNA-uridine isomerase</fullName>
    </alternativeName>
</protein>
<keyword id="KW-0413">Isomerase</keyword>
<keyword id="KW-0819">tRNA processing</keyword>
<accession>Q1MN41</accession>
<gene>
    <name evidence="1" type="primary">truB</name>
    <name type="ordered locus">RL0123</name>
</gene>
<name>TRUB_RHIJ3</name>
<evidence type="ECO:0000255" key="1">
    <source>
        <dbReference type="HAMAP-Rule" id="MF_01080"/>
    </source>
</evidence>
<feature type="chain" id="PRO_1000084655" description="tRNA pseudouridine synthase B">
    <location>
        <begin position="1"/>
        <end position="310"/>
    </location>
</feature>
<feature type="active site" description="Nucleophile" evidence="1">
    <location>
        <position position="49"/>
    </location>
</feature>
<organism>
    <name type="scientific">Rhizobium johnstonii (strain DSM 114642 / LMG 32736 / 3841)</name>
    <name type="common">Rhizobium leguminosarum bv. viciae</name>
    <dbReference type="NCBI Taxonomy" id="216596"/>
    <lineage>
        <taxon>Bacteria</taxon>
        <taxon>Pseudomonadati</taxon>
        <taxon>Pseudomonadota</taxon>
        <taxon>Alphaproteobacteria</taxon>
        <taxon>Hyphomicrobiales</taxon>
        <taxon>Rhizobiaceae</taxon>
        <taxon>Rhizobium/Agrobacterium group</taxon>
        <taxon>Rhizobium</taxon>
        <taxon>Rhizobium johnstonii</taxon>
    </lineage>
</organism>
<comment type="function">
    <text evidence="1">Responsible for synthesis of pseudouridine from uracil-55 in the psi GC loop of transfer RNAs.</text>
</comment>
<comment type="catalytic activity">
    <reaction evidence="1">
        <text>uridine(55) in tRNA = pseudouridine(55) in tRNA</text>
        <dbReference type="Rhea" id="RHEA:42532"/>
        <dbReference type="Rhea" id="RHEA-COMP:10101"/>
        <dbReference type="Rhea" id="RHEA-COMP:10102"/>
        <dbReference type="ChEBI" id="CHEBI:65314"/>
        <dbReference type="ChEBI" id="CHEBI:65315"/>
        <dbReference type="EC" id="5.4.99.25"/>
    </reaction>
</comment>
<comment type="similarity">
    <text evidence="1">Belongs to the pseudouridine synthase TruB family. Type 1 subfamily.</text>
</comment>
<proteinExistence type="inferred from homology"/>
<dbReference type="EC" id="5.4.99.25" evidence="1"/>
<dbReference type="EMBL" id="AM236080">
    <property type="protein sequence ID" value="CAK05611.1"/>
    <property type="molecule type" value="Genomic_DNA"/>
</dbReference>
<dbReference type="RefSeq" id="WP_011649945.1">
    <property type="nucleotide sequence ID" value="NC_008380.1"/>
</dbReference>
<dbReference type="SMR" id="Q1MN41"/>
<dbReference type="EnsemblBacteria" id="CAK05611">
    <property type="protein sequence ID" value="CAK05611"/>
    <property type="gene ID" value="RL0123"/>
</dbReference>
<dbReference type="KEGG" id="rle:RL0123"/>
<dbReference type="eggNOG" id="COG0130">
    <property type="taxonomic scope" value="Bacteria"/>
</dbReference>
<dbReference type="HOGENOM" id="CLU_032087_0_3_5"/>
<dbReference type="Proteomes" id="UP000006575">
    <property type="component" value="Chromosome"/>
</dbReference>
<dbReference type="GO" id="GO:0003723">
    <property type="term" value="F:RNA binding"/>
    <property type="evidence" value="ECO:0007669"/>
    <property type="project" value="InterPro"/>
</dbReference>
<dbReference type="GO" id="GO:0160148">
    <property type="term" value="F:tRNA pseudouridine(55) synthase activity"/>
    <property type="evidence" value="ECO:0007669"/>
    <property type="project" value="UniProtKB-EC"/>
</dbReference>
<dbReference type="GO" id="GO:1990481">
    <property type="term" value="P:mRNA pseudouridine synthesis"/>
    <property type="evidence" value="ECO:0007669"/>
    <property type="project" value="TreeGrafter"/>
</dbReference>
<dbReference type="GO" id="GO:0031119">
    <property type="term" value="P:tRNA pseudouridine synthesis"/>
    <property type="evidence" value="ECO:0007669"/>
    <property type="project" value="UniProtKB-UniRule"/>
</dbReference>
<dbReference type="CDD" id="cd02573">
    <property type="entry name" value="PseudoU_synth_EcTruB"/>
    <property type="match status" value="1"/>
</dbReference>
<dbReference type="Gene3D" id="3.30.2350.10">
    <property type="entry name" value="Pseudouridine synthase"/>
    <property type="match status" value="1"/>
</dbReference>
<dbReference type="HAMAP" id="MF_01080">
    <property type="entry name" value="TruB_bact"/>
    <property type="match status" value="1"/>
</dbReference>
<dbReference type="InterPro" id="IPR020103">
    <property type="entry name" value="PsdUridine_synth_cat_dom_sf"/>
</dbReference>
<dbReference type="InterPro" id="IPR002501">
    <property type="entry name" value="PsdUridine_synth_N"/>
</dbReference>
<dbReference type="InterPro" id="IPR014780">
    <property type="entry name" value="tRNA_psdUridine_synth_TruB"/>
</dbReference>
<dbReference type="InterPro" id="IPR032819">
    <property type="entry name" value="TruB_C"/>
</dbReference>
<dbReference type="NCBIfam" id="TIGR00431">
    <property type="entry name" value="TruB"/>
    <property type="match status" value="1"/>
</dbReference>
<dbReference type="PANTHER" id="PTHR13767:SF2">
    <property type="entry name" value="PSEUDOURIDYLATE SYNTHASE TRUB1"/>
    <property type="match status" value="1"/>
</dbReference>
<dbReference type="PANTHER" id="PTHR13767">
    <property type="entry name" value="TRNA-PSEUDOURIDINE SYNTHASE"/>
    <property type="match status" value="1"/>
</dbReference>
<dbReference type="Pfam" id="PF16198">
    <property type="entry name" value="TruB_C_2"/>
    <property type="match status" value="1"/>
</dbReference>
<dbReference type="Pfam" id="PF01509">
    <property type="entry name" value="TruB_N"/>
    <property type="match status" value="1"/>
</dbReference>
<dbReference type="SUPFAM" id="SSF55120">
    <property type="entry name" value="Pseudouridine synthase"/>
    <property type="match status" value="1"/>
</dbReference>
<sequence>MSKPRKPKGRPISGWLILDKPVDFGSTEAVSKIKWLYKAEKAGHAGTLDPLASGMLPIALGDATKTVPYVMDGRKIYEFTVSWGEERATDDLEGDVTKSSDKRPSEQQIRDILPGYIGTISQVPPQFSAIKIAGERAYDLAREGETIEIPSREVDIFRLTLLACPDADSAHFEVECGKGTYVRALARDFGRELGCYGHVSGLRRTFVAPFAEGAMVPLADLVALEAIEDMDERLAALDALLIDTCEALSSLPHLVINDDQAHRLKMGNPILVRGRDAPVAESEAYATARGKLIAIGEIGQGEFRPKRVFA</sequence>
<reference key="1">
    <citation type="journal article" date="2006" name="Genome Biol.">
        <title>The genome of Rhizobium leguminosarum has recognizable core and accessory components.</title>
        <authorList>
            <person name="Young J.P.W."/>
            <person name="Crossman L.C."/>
            <person name="Johnston A.W.B."/>
            <person name="Thomson N.R."/>
            <person name="Ghazoui Z.F."/>
            <person name="Hull K.H."/>
            <person name="Wexler M."/>
            <person name="Curson A.R.J."/>
            <person name="Todd J.D."/>
            <person name="Poole P.S."/>
            <person name="Mauchline T.H."/>
            <person name="East A.K."/>
            <person name="Quail M.A."/>
            <person name="Churcher C."/>
            <person name="Arrowsmith C."/>
            <person name="Cherevach I."/>
            <person name="Chillingworth T."/>
            <person name="Clarke K."/>
            <person name="Cronin A."/>
            <person name="Davis P."/>
            <person name="Fraser A."/>
            <person name="Hance Z."/>
            <person name="Hauser H."/>
            <person name="Jagels K."/>
            <person name="Moule S."/>
            <person name="Mungall K."/>
            <person name="Norbertczak H."/>
            <person name="Rabbinowitsch E."/>
            <person name="Sanders M."/>
            <person name="Simmonds M."/>
            <person name="Whitehead S."/>
            <person name="Parkhill J."/>
        </authorList>
    </citation>
    <scope>NUCLEOTIDE SEQUENCE [LARGE SCALE GENOMIC DNA]</scope>
    <source>
        <strain>DSM 114642 / LMG 32736 / 3841</strain>
    </source>
</reference>